<reference key="1">
    <citation type="journal article" date="2009" name="Genome Res.">
        <title>Genome structure of a Saccharomyces cerevisiae strain widely used in bioethanol production.</title>
        <authorList>
            <person name="Argueso J.L."/>
            <person name="Carazzolle M.F."/>
            <person name="Mieczkowski P.A."/>
            <person name="Duarte F.M."/>
            <person name="Netto O.V.C."/>
            <person name="Missawa S.K."/>
            <person name="Galzerani F."/>
            <person name="Costa G.G.L."/>
            <person name="Vidal R.O."/>
            <person name="Noronha M.F."/>
            <person name="Dominska M."/>
            <person name="Andrietta M.G.S."/>
            <person name="Andrietta S.R."/>
            <person name="Cunha A.F."/>
            <person name="Gomes L.H."/>
            <person name="Tavares F.C.A."/>
            <person name="Alcarde A.R."/>
            <person name="Dietrich F.S."/>
            <person name="McCusker J.H."/>
            <person name="Petes T.D."/>
            <person name="Pereira G.A.G."/>
        </authorList>
    </citation>
    <scope>NUCLEOTIDE SEQUENCE [LARGE SCALE GENOMIC DNA]</scope>
    <source>
        <strain>JAY291</strain>
    </source>
</reference>
<keyword id="KW-0963">Cytoplasm</keyword>
<keyword id="KW-0539">Nucleus</keyword>
<keyword id="KW-0597">Phosphoprotein</keyword>
<gene>
    <name type="primary">HRI1</name>
    <name type="ORF">C1Q_04587</name>
</gene>
<feature type="chain" id="PRO_0000410814" description="Protein HRI1">
    <location>
        <begin position="1"/>
        <end position="244"/>
    </location>
</feature>
<feature type="modified residue" description="Phosphoserine" evidence="2">
    <location>
        <position position="143"/>
    </location>
</feature>
<organism>
    <name type="scientific">Saccharomyces cerevisiae (strain JAY291)</name>
    <name type="common">Baker's yeast</name>
    <dbReference type="NCBI Taxonomy" id="574961"/>
    <lineage>
        <taxon>Eukaryota</taxon>
        <taxon>Fungi</taxon>
        <taxon>Dikarya</taxon>
        <taxon>Ascomycota</taxon>
        <taxon>Saccharomycotina</taxon>
        <taxon>Saccharomycetes</taxon>
        <taxon>Saccharomycetales</taxon>
        <taxon>Saccharomycetaceae</taxon>
        <taxon>Saccharomyces</taxon>
    </lineage>
</organism>
<name>HRI1_YEAS2</name>
<comment type="subunit">
    <text evidence="1">Interacts with HRR25. May interact with SEC72.</text>
</comment>
<comment type="subcellular location">
    <subcellularLocation>
        <location evidence="1">Cytoplasm</location>
    </subcellularLocation>
    <subcellularLocation>
        <location evidence="1">Nucleus</location>
    </subcellularLocation>
</comment>
<comment type="similarity">
    <text evidence="3">Belongs to the HRI1 family.</text>
</comment>
<evidence type="ECO:0000250" key="1"/>
<evidence type="ECO:0000250" key="2">
    <source>
        <dbReference type="UniProtKB" id="Q05905"/>
    </source>
</evidence>
<evidence type="ECO:0000305" key="3"/>
<protein>
    <recommendedName>
        <fullName>Protein HRI1</fullName>
    </recommendedName>
    <alternativeName>
        <fullName>HRR25-interacting protein 1</fullName>
    </alternativeName>
</protein>
<dbReference type="EMBL" id="ACFL01000359">
    <property type="protein sequence ID" value="EEU05077.1"/>
    <property type="molecule type" value="Genomic_DNA"/>
</dbReference>
<dbReference type="SMR" id="C7GVT8"/>
<dbReference type="Proteomes" id="UP000008073">
    <property type="component" value="Unassembled WGS sequence"/>
</dbReference>
<dbReference type="GO" id="GO:0005737">
    <property type="term" value="C:cytoplasm"/>
    <property type="evidence" value="ECO:0007669"/>
    <property type="project" value="UniProtKB-SubCell"/>
</dbReference>
<dbReference type="GO" id="GO:0005634">
    <property type="term" value="C:nucleus"/>
    <property type="evidence" value="ECO:0007669"/>
    <property type="project" value="UniProtKB-SubCell"/>
</dbReference>
<dbReference type="CDD" id="cd11693">
    <property type="entry name" value="HRI1_C_like"/>
    <property type="match status" value="1"/>
</dbReference>
<dbReference type="CDD" id="cd11692">
    <property type="entry name" value="HRI1_N_like"/>
    <property type="match status" value="1"/>
</dbReference>
<dbReference type="Gene3D" id="2.40.128.310">
    <property type="entry name" value="Protein HRI1, C-terminal domain"/>
    <property type="match status" value="1"/>
</dbReference>
<dbReference type="Gene3D" id="2.40.128.320">
    <property type="entry name" value="Protein HRI1, N-terminal domain"/>
    <property type="match status" value="1"/>
</dbReference>
<dbReference type="InterPro" id="IPR031818">
    <property type="entry name" value="Hri1"/>
</dbReference>
<dbReference type="InterPro" id="IPR038744">
    <property type="entry name" value="Hri1_N"/>
</dbReference>
<dbReference type="InterPro" id="IPR043047">
    <property type="entry name" value="Hri1_N_sf"/>
</dbReference>
<dbReference type="Pfam" id="PF16815">
    <property type="entry name" value="HRI1"/>
    <property type="match status" value="1"/>
</dbReference>
<proteinExistence type="inferred from homology"/>
<accession>C7GVT8</accession>
<sequence>MPALLKRLLFQVGPHPNERTFTLSSVSTDGHYISLRPFVKPSGDELSFPFEWAFAGTNETVKVNDQGNGVVTQDFNFWLDTNVYLNVPNTHRGEVNTTWKNWDSGCVEETGAVYPFGADKESVSFRELWQPVDPSREDLVIVSPNNEKFSSNARSIVLKVTDEAYDGLVIVIGRWIQGFLSQKNNNTIEGLNFIRLLEKDSGKSEFLLSYGKEVNKIPQSYENLKKGSTVTSNGLNWEVIEYHA</sequence>